<sequence length="459" mass="51728">MLRWLIGGGREPQGLAEKSPLQTIGEEQTQNPYTELLVLKAHHDIVRFLVQLDDYRFASAGDDGIVVVWNAQTGEKLLELNGHTQKITAIITFPSLESCEEKNQLILTASADRTVIVWDGDTTRQVQRISCFQSTVKCLTVLQRLDVWLSGGNDLCVWNRKLDLLCKTSHLSDTGISALVEIPKNCVVAAVGKELIIFRLVAPTEGSLEWDILEVKRLLDHQDNILSLINVNDLSFVTGSHVGELIIWDALDWTMQAYERNFWDPSPQLDTQQEIKLCQKSNDISIHHFTCDEENVFAAVGRGLYVYSLQMKRVIACQKTAHDSNVLHVARLPNRQLISCSEDGSVRIWELREKQQLAAEPVPTGFFNMWGFGRVSKQASQPVKKQQENATSCSLELIGDLIGHSSSVEMFLYFEDHGLVTCSADHLIILWKNGERESGLRSLRLFQKLEENGDLYLAV</sequence>
<accession>Q9HAD4</accession>
<accession>B4DT55</accession>
<accession>Q7Z792</accession>
<accession>Q8IWG3</accession>
<accession>Q8IXA9</accession>
<accession>Q8NDA7</accession>
<accession>Q9NV62</accession>
<proteinExistence type="evidence at protein level"/>
<keyword id="KW-0002">3D-structure</keyword>
<keyword id="KW-0025">Alternative splicing</keyword>
<keyword id="KW-0072">Autophagy</keyword>
<keyword id="KW-0963">Cytoplasm</keyword>
<keyword id="KW-1267">Proteomics identification</keyword>
<keyword id="KW-1185">Reference proteome</keyword>
<keyword id="KW-0677">Repeat</keyword>
<keyword id="KW-0853">WD repeat</keyword>
<evidence type="ECO:0000269" key="1">
    <source>
    </source>
</evidence>
<evidence type="ECO:0000269" key="2">
    <source>
    </source>
</evidence>
<evidence type="ECO:0000269" key="3">
    <source>
    </source>
</evidence>
<evidence type="ECO:0000269" key="4">
    <source>
    </source>
</evidence>
<evidence type="ECO:0000269" key="5">
    <source>
    </source>
</evidence>
<evidence type="ECO:0000269" key="6">
    <source>
    </source>
</evidence>
<evidence type="ECO:0000269" key="7">
    <source>
    </source>
</evidence>
<evidence type="ECO:0000303" key="8">
    <source>
    </source>
</evidence>
<evidence type="ECO:0000305" key="9"/>
<evidence type="ECO:0000312" key="10">
    <source>
        <dbReference type="HGNC" id="HGNC:25601"/>
    </source>
</evidence>
<evidence type="ECO:0007744" key="11">
    <source>
        <dbReference type="PDB" id="6LT0"/>
    </source>
</evidence>
<evidence type="ECO:0007829" key="12">
    <source>
        <dbReference type="PDB" id="6LT0"/>
    </source>
</evidence>
<reference key="1">
    <citation type="submission" date="1998-12" db="EMBL/GenBank/DDBJ databases">
        <authorList>
            <person name="Zhao B."/>
            <person name="Xu Y.Y."/>
            <person name="Liu Y.Q."/>
            <person name="Wang X.Y."/>
            <person name="Liu B."/>
            <person name="Ye J."/>
            <person name="Song L."/>
            <person name="Zhao Y."/>
            <person name="Cao H.Q."/>
            <person name="Zhao X.W."/>
            <person name="Gao Y."/>
            <person name="Liu L.S."/>
            <person name="Ding J.F."/>
            <person name="Gao R.L."/>
            <person name="Wu Q.Y."/>
            <person name="Qiang B.Q."/>
            <person name="Yuan J.G."/>
            <person name="Liew C.C."/>
            <person name="Zhao M.S."/>
            <person name="Hui R.T."/>
        </authorList>
    </citation>
    <scope>NUCLEOTIDE SEQUENCE [LARGE SCALE MRNA] (ISOFORM 1)</scope>
    <source>
        <tissue>Aorta</tissue>
    </source>
</reference>
<reference key="2">
    <citation type="journal article" date="2004" name="Nat. Genet.">
        <title>Complete sequencing and characterization of 21,243 full-length human cDNAs.</title>
        <authorList>
            <person name="Ota T."/>
            <person name="Suzuki Y."/>
            <person name="Nishikawa T."/>
            <person name="Otsuki T."/>
            <person name="Sugiyama T."/>
            <person name="Irie R."/>
            <person name="Wakamatsu A."/>
            <person name="Hayashi K."/>
            <person name="Sato H."/>
            <person name="Nagai K."/>
            <person name="Kimura K."/>
            <person name="Makita H."/>
            <person name="Sekine M."/>
            <person name="Obayashi M."/>
            <person name="Nishi T."/>
            <person name="Shibahara T."/>
            <person name="Tanaka T."/>
            <person name="Ishii S."/>
            <person name="Yamamoto J."/>
            <person name="Saito K."/>
            <person name="Kawai Y."/>
            <person name="Isono Y."/>
            <person name="Nakamura Y."/>
            <person name="Nagahari K."/>
            <person name="Murakami K."/>
            <person name="Yasuda T."/>
            <person name="Iwayanagi T."/>
            <person name="Wagatsuma M."/>
            <person name="Shiratori A."/>
            <person name="Sudo H."/>
            <person name="Hosoiri T."/>
            <person name="Kaku Y."/>
            <person name="Kodaira H."/>
            <person name="Kondo H."/>
            <person name="Sugawara M."/>
            <person name="Takahashi M."/>
            <person name="Kanda K."/>
            <person name="Yokoi T."/>
            <person name="Furuya T."/>
            <person name="Kikkawa E."/>
            <person name="Omura Y."/>
            <person name="Abe K."/>
            <person name="Kamihara K."/>
            <person name="Katsuta N."/>
            <person name="Sato K."/>
            <person name="Tanikawa M."/>
            <person name="Yamazaki M."/>
            <person name="Ninomiya K."/>
            <person name="Ishibashi T."/>
            <person name="Yamashita H."/>
            <person name="Murakawa K."/>
            <person name="Fujimori K."/>
            <person name="Tanai H."/>
            <person name="Kimata M."/>
            <person name="Watanabe M."/>
            <person name="Hiraoka S."/>
            <person name="Chiba Y."/>
            <person name="Ishida S."/>
            <person name="Ono Y."/>
            <person name="Takiguchi S."/>
            <person name="Watanabe S."/>
            <person name="Yosida M."/>
            <person name="Hotuta T."/>
            <person name="Kusano J."/>
            <person name="Kanehori K."/>
            <person name="Takahashi-Fujii A."/>
            <person name="Hara H."/>
            <person name="Tanase T.-O."/>
            <person name="Nomura Y."/>
            <person name="Togiya S."/>
            <person name="Komai F."/>
            <person name="Hara R."/>
            <person name="Takeuchi K."/>
            <person name="Arita M."/>
            <person name="Imose N."/>
            <person name="Musashino K."/>
            <person name="Yuuki H."/>
            <person name="Oshima A."/>
            <person name="Sasaki N."/>
            <person name="Aotsuka S."/>
            <person name="Yoshikawa Y."/>
            <person name="Matsunawa H."/>
            <person name="Ichihara T."/>
            <person name="Shiohata N."/>
            <person name="Sano S."/>
            <person name="Moriya S."/>
            <person name="Momiyama H."/>
            <person name="Satoh N."/>
            <person name="Takami S."/>
            <person name="Terashima Y."/>
            <person name="Suzuki O."/>
            <person name="Nakagawa S."/>
            <person name="Senoh A."/>
            <person name="Mizoguchi H."/>
            <person name="Goto Y."/>
            <person name="Shimizu F."/>
            <person name="Wakebe H."/>
            <person name="Hishigaki H."/>
            <person name="Watanabe T."/>
            <person name="Sugiyama A."/>
            <person name="Takemoto M."/>
            <person name="Kawakami B."/>
            <person name="Yamazaki M."/>
            <person name="Watanabe K."/>
            <person name="Kumagai A."/>
            <person name="Itakura S."/>
            <person name="Fukuzumi Y."/>
            <person name="Fujimori Y."/>
            <person name="Komiyama M."/>
            <person name="Tashiro H."/>
            <person name="Tanigami A."/>
            <person name="Fujiwara T."/>
            <person name="Ono T."/>
            <person name="Yamada K."/>
            <person name="Fujii Y."/>
            <person name="Ozaki K."/>
            <person name="Hirao M."/>
            <person name="Ohmori Y."/>
            <person name="Kawabata A."/>
            <person name="Hikiji T."/>
            <person name="Kobatake N."/>
            <person name="Inagaki H."/>
            <person name="Ikema Y."/>
            <person name="Okamoto S."/>
            <person name="Okitani R."/>
            <person name="Kawakami T."/>
            <person name="Noguchi S."/>
            <person name="Itoh T."/>
            <person name="Shigeta K."/>
            <person name="Senba T."/>
            <person name="Matsumura K."/>
            <person name="Nakajima Y."/>
            <person name="Mizuno T."/>
            <person name="Morinaga M."/>
            <person name="Sasaki M."/>
            <person name="Togashi T."/>
            <person name="Oyama M."/>
            <person name="Hata H."/>
            <person name="Watanabe M."/>
            <person name="Komatsu T."/>
            <person name="Mizushima-Sugano J."/>
            <person name="Satoh T."/>
            <person name="Shirai Y."/>
            <person name="Takahashi Y."/>
            <person name="Nakagawa K."/>
            <person name="Okumura K."/>
            <person name="Nagase T."/>
            <person name="Nomura N."/>
            <person name="Kikuchi H."/>
            <person name="Masuho Y."/>
            <person name="Yamashita R."/>
            <person name="Nakai K."/>
            <person name="Yada T."/>
            <person name="Nakamura Y."/>
            <person name="Ohara O."/>
            <person name="Isogai T."/>
            <person name="Sugano S."/>
        </authorList>
    </citation>
    <scope>NUCLEOTIDE SEQUENCE [LARGE SCALE MRNA] (ISOFORMS 1 AND 2)</scope>
    <scope>VARIANT ILE-329</scope>
    <source>
        <tissue>Embryo</tissue>
        <tissue>Ovarian carcinoma</tissue>
        <tissue>Pericardium</tissue>
    </source>
</reference>
<reference key="3">
    <citation type="journal article" date="2004" name="Nature">
        <title>The DNA sequence and comparative analysis of human chromosome 5.</title>
        <authorList>
            <person name="Schmutz J."/>
            <person name="Martin J."/>
            <person name="Terry A."/>
            <person name="Couronne O."/>
            <person name="Grimwood J."/>
            <person name="Lowry S."/>
            <person name="Gordon L.A."/>
            <person name="Scott D."/>
            <person name="Xie G."/>
            <person name="Huang W."/>
            <person name="Hellsten U."/>
            <person name="Tran-Gyamfi M."/>
            <person name="She X."/>
            <person name="Prabhakar S."/>
            <person name="Aerts A."/>
            <person name="Altherr M."/>
            <person name="Bajorek E."/>
            <person name="Black S."/>
            <person name="Branscomb E."/>
            <person name="Caoile C."/>
            <person name="Challacombe J.F."/>
            <person name="Chan Y.M."/>
            <person name="Denys M."/>
            <person name="Detter J.C."/>
            <person name="Escobar J."/>
            <person name="Flowers D."/>
            <person name="Fotopulos D."/>
            <person name="Glavina T."/>
            <person name="Gomez M."/>
            <person name="Gonzales E."/>
            <person name="Goodstein D."/>
            <person name="Grigoriev I."/>
            <person name="Groza M."/>
            <person name="Hammon N."/>
            <person name="Hawkins T."/>
            <person name="Haydu L."/>
            <person name="Israni S."/>
            <person name="Jett J."/>
            <person name="Kadner K."/>
            <person name="Kimball H."/>
            <person name="Kobayashi A."/>
            <person name="Lopez F."/>
            <person name="Lou Y."/>
            <person name="Martinez D."/>
            <person name="Medina C."/>
            <person name="Morgan J."/>
            <person name="Nandkeshwar R."/>
            <person name="Noonan J.P."/>
            <person name="Pitluck S."/>
            <person name="Pollard M."/>
            <person name="Predki P."/>
            <person name="Priest J."/>
            <person name="Ramirez L."/>
            <person name="Retterer J."/>
            <person name="Rodriguez A."/>
            <person name="Rogers S."/>
            <person name="Salamov A."/>
            <person name="Salazar A."/>
            <person name="Thayer N."/>
            <person name="Tice H."/>
            <person name="Tsai M."/>
            <person name="Ustaszewska A."/>
            <person name="Vo N."/>
            <person name="Wheeler J."/>
            <person name="Wu K."/>
            <person name="Yang J."/>
            <person name="Dickson M."/>
            <person name="Cheng J.-F."/>
            <person name="Eichler E.E."/>
            <person name="Olsen A."/>
            <person name="Pennacchio L.A."/>
            <person name="Rokhsar D.S."/>
            <person name="Richardson P."/>
            <person name="Lucas S.M."/>
            <person name="Myers R.M."/>
            <person name="Rubin E.M."/>
        </authorList>
    </citation>
    <scope>NUCLEOTIDE SEQUENCE [LARGE SCALE GENOMIC DNA]</scope>
</reference>
<reference key="4">
    <citation type="journal article" date="2004" name="Genome Res.">
        <title>The status, quality, and expansion of the NIH full-length cDNA project: the Mammalian Gene Collection (MGC).</title>
        <authorList>
            <consortium name="The MGC Project Team"/>
        </authorList>
    </citation>
    <scope>NUCLEOTIDE SEQUENCE [LARGE SCALE MRNA] (ISOFORM 1)</scope>
    <source>
        <tissue>Placenta</tissue>
    </source>
</reference>
<reference key="5">
    <citation type="journal article" date="2007" name="BMC Genomics">
        <title>The full-ORF clone resource of the German cDNA consortium.</title>
        <authorList>
            <person name="Bechtel S."/>
            <person name="Rosenfelder H."/>
            <person name="Duda A."/>
            <person name="Schmidt C.P."/>
            <person name="Ernst U."/>
            <person name="Wellenreuther R."/>
            <person name="Mehrle A."/>
            <person name="Schuster C."/>
            <person name="Bahr A."/>
            <person name="Bloecker H."/>
            <person name="Heubner D."/>
            <person name="Hoerlein A."/>
            <person name="Michel G."/>
            <person name="Wedler H."/>
            <person name="Koehrer K."/>
            <person name="Ottenwaelder B."/>
            <person name="Poustka A."/>
            <person name="Wiemann S."/>
            <person name="Schupp I."/>
        </authorList>
    </citation>
    <scope>NUCLEOTIDE SEQUENCE [LARGE SCALE MRNA] OF 175-459 (ISOFORM 1/2)</scope>
    <scope>VARIANT ILE-329</scope>
    <source>
        <tissue>Testis</tissue>
    </source>
</reference>
<reference key="6">
    <citation type="journal article" date="2016" name="Acta Neuropathol. Commun.">
        <title>The ALS/FTLD associated protein C9orf72 associates with SMCR8 and WDR41 to regulate the autophagy-lysosome pathway.</title>
        <authorList>
            <person name="Sullivan P.M."/>
            <person name="Zhou X."/>
            <person name="Robins A.M."/>
            <person name="Paushter D.H."/>
            <person name="Kim D."/>
            <person name="Smolka M.B."/>
            <person name="Hu F."/>
        </authorList>
    </citation>
    <scope>FUNCTION</scope>
    <scope>IDENTIFICATION IN THE C9ORF72-SMCR8 COMPLEX</scope>
    <scope>SUBCELLULAR LOCATION</scope>
</reference>
<reference key="7">
    <citation type="journal article" date="2016" name="EMBO J.">
        <title>Loss of C9ORF72 impairs autophagy and synergizes with polyQ Ataxin-2 to induce motor neuron dysfunction and cell death.</title>
        <authorList>
            <person name="Sellier C."/>
            <person name="Campanari M.L."/>
            <person name="Julie Corbier C."/>
            <person name="Gaucherot A."/>
            <person name="Kolb-Cheynel I."/>
            <person name="Oulad-Abdelghani M."/>
            <person name="Ruffenach F."/>
            <person name="Page A."/>
            <person name="Ciura S."/>
            <person name="Kabashi E."/>
            <person name="Charlet-Berguerand N."/>
        </authorList>
    </citation>
    <scope>FUNCTION</scope>
    <scope>IDENTIFICATION IN THE C9ORF72-SMCR8 COMPLEX</scope>
</reference>
<reference key="8">
    <citation type="journal article" date="2016" name="Sci. Adv.">
        <title>A C9ORF72/SMCR8-containing complex regulates ULK1 and plays a dual role in autophagy.</title>
        <authorList>
            <person name="Yang M."/>
            <person name="Liang C."/>
            <person name="Swaminathan K."/>
            <person name="Herrlinger S."/>
            <person name="Lai F."/>
            <person name="Shiekhattar R."/>
            <person name="Chen J.F."/>
        </authorList>
    </citation>
    <scope>FUNCTION</scope>
    <scope>IDENTIFICATION IN THE C9ORF72-SMCR8 COMPLEX</scope>
</reference>
<reference key="9">
    <citation type="journal article" date="2017" name="Elife">
        <title>Multiplex image-based autophagy RNAi screening identifies SMCR8 as ULK1 kinase activity and gene expression regulator.</title>
        <authorList>
            <person name="Jung J."/>
            <person name="Nayak A."/>
            <person name="Schaeffer V."/>
            <person name="Starzetz T."/>
            <person name="Kirsch A.K."/>
            <person name="Mueller S."/>
            <person name="Dikic I."/>
            <person name="Mittelbronn M."/>
            <person name="Behrends C."/>
        </authorList>
    </citation>
    <scope>FUNCTION</scope>
    <scope>IDENTIFICATION IN THE C9ORF72-SMCR8 COMPLEX</scope>
</reference>
<reference evidence="11" key="10">
    <citation type="journal article" date="2020" name="Proc. Natl. Acad. Sci. U.S.A.">
        <title>Cryo-EM structure of C9ORF72-SMCR8-WDR41 reveals the role as a GAP for Rab8a and Rab11a.</title>
        <authorList>
            <person name="Tang D."/>
            <person name="Sheng J."/>
            <person name="Xu L."/>
            <person name="Zhan X."/>
            <person name="Liu J."/>
            <person name="Jiang H."/>
            <person name="Shu X."/>
            <person name="Liu X."/>
            <person name="Zhang T."/>
            <person name="Jiang L."/>
            <person name="Zhou C."/>
            <person name="Li W."/>
            <person name="Cheng W."/>
            <person name="Li Z."/>
            <person name="Wang K."/>
            <person name="Lu K."/>
            <person name="Yan C."/>
            <person name="Qi S."/>
        </authorList>
    </citation>
    <scope>STRUCTURE BY ELECTRON MICROSCOPY (3.20 ANGSTROMS) IN THE C9ORF72-SMCR8 COMPLEX</scope>
    <scope>FUNCTION</scope>
    <scope>MUTAGENESIS OF SER-438; ARG-441; SER-442; LEU-445; PHE-446 AND LEU-449</scope>
</reference>
<gene>
    <name evidence="10" type="primary">WDR41</name>
    <name type="ORF">MSTP048</name>
</gene>
<protein>
    <recommendedName>
        <fullName evidence="9">WD repeat-containing protein 41</fullName>
    </recommendedName>
</protein>
<dbReference type="EMBL" id="AF115511">
    <property type="protein sequence ID" value="AAO06948.1"/>
    <property type="status" value="ALT_FRAME"/>
    <property type="molecule type" value="mRNA"/>
</dbReference>
<dbReference type="EMBL" id="AK001766">
    <property type="protein sequence ID" value="BAA91895.1"/>
    <property type="molecule type" value="mRNA"/>
</dbReference>
<dbReference type="EMBL" id="AK021855">
    <property type="protein sequence ID" value="BAB13915.1"/>
    <property type="molecule type" value="mRNA"/>
</dbReference>
<dbReference type="EMBL" id="AK023977">
    <property type="protein sequence ID" value="BAB14749.1"/>
    <property type="molecule type" value="mRNA"/>
</dbReference>
<dbReference type="EMBL" id="AK300058">
    <property type="protein sequence ID" value="BAG61867.1"/>
    <property type="molecule type" value="mRNA"/>
</dbReference>
<dbReference type="EMBL" id="AC010234">
    <property type="status" value="NOT_ANNOTATED_CDS"/>
    <property type="molecule type" value="Genomic_DNA"/>
</dbReference>
<dbReference type="EMBL" id="AC108173">
    <property type="status" value="NOT_ANNOTATED_CDS"/>
    <property type="molecule type" value="Genomic_DNA"/>
</dbReference>
<dbReference type="EMBL" id="BC040241">
    <property type="protein sequence ID" value="AAH40241.1"/>
    <property type="molecule type" value="mRNA"/>
</dbReference>
<dbReference type="EMBL" id="AL834138">
    <property type="protein sequence ID" value="CAD38853.2"/>
    <property type="molecule type" value="mRNA"/>
</dbReference>
<dbReference type="CCDS" id="CCDS4038.1">
    <molecule id="Q9HAD4-1"/>
</dbReference>
<dbReference type="RefSeq" id="NP_060738.2">
    <molecule id="Q9HAD4-1"/>
    <property type="nucleotide sequence ID" value="NM_018268.3"/>
</dbReference>
<dbReference type="PDB" id="6LT0">
    <property type="method" value="EM"/>
    <property type="resolution" value="3.20 A"/>
    <property type="chains" value="A/D=1-459"/>
</dbReference>
<dbReference type="PDB" id="6V4U">
    <property type="method" value="EM"/>
    <property type="resolution" value="3.80 A"/>
    <property type="chains" value="C=1-459"/>
</dbReference>
<dbReference type="PDB" id="7MGE">
    <property type="method" value="EM"/>
    <property type="resolution" value="3.94 A"/>
    <property type="chains" value="A=1-459"/>
</dbReference>
<dbReference type="PDB" id="8W3V">
    <property type="method" value="X-ray"/>
    <property type="resolution" value="2.20 A"/>
    <property type="chains" value="A/B=30-440"/>
</dbReference>
<dbReference type="PDBsum" id="6LT0"/>
<dbReference type="PDBsum" id="6V4U"/>
<dbReference type="PDBsum" id="7MGE"/>
<dbReference type="PDBsum" id="8W3V"/>
<dbReference type="EMDB" id="EMD-0966"/>
<dbReference type="EMDB" id="EMD-21048"/>
<dbReference type="EMDB" id="EMD-23827"/>
<dbReference type="SMR" id="Q9HAD4"/>
<dbReference type="BioGRID" id="120546">
    <property type="interactions" value="140"/>
</dbReference>
<dbReference type="ComplexPortal" id="CPX-3961">
    <property type="entry name" value="C9orf72-SMCR8 complex"/>
</dbReference>
<dbReference type="CORUM" id="Q9HAD4"/>
<dbReference type="FunCoup" id="Q9HAD4">
    <property type="interactions" value="1306"/>
</dbReference>
<dbReference type="IntAct" id="Q9HAD4">
    <property type="interactions" value="36"/>
</dbReference>
<dbReference type="MINT" id="Q9HAD4"/>
<dbReference type="STRING" id="9606.ENSP00000296679"/>
<dbReference type="GlyGen" id="Q9HAD4">
    <property type="glycosylation" value="1 site"/>
</dbReference>
<dbReference type="iPTMnet" id="Q9HAD4"/>
<dbReference type="PhosphoSitePlus" id="Q9HAD4"/>
<dbReference type="BioMuta" id="WDR41"/>
<dbReference type="DMDM" id="134047969"/>
<dbReference type="jPOST" id="Q9HAD4"/>
<dbReference type="MassIVE" id="Q9HAD4"/>
<dbReference type="PaxDb" id="9606-ENSP00000296679"/>
<dbReference type="PeptideAtlas" id="Q9HAD4"/>
<dbReference type="ProteomicsDB" id="5074"/>
<dbReference type="ProteomicsDB" id="81396">
    <molecule id="Q9HAD4-1"/>
</dbReference>
<dbReference type="Pumba" id="Q9HAD4"/>
<dbReference type="Antibodypedia" id="24490">
    <property type="antibodies" value="96 antibodies from 18 providers"/>
</dbReference>
<dbReference type="DNASU" id="55255"/>
<dbReference type="Ensembl" id="ENST00000296679.9">
    <molecule id="Q9HAD4-1"/>
    <property type="protein sequence ID" value="ENSP00000296679.4"/>
    <property type="gene ID" value="ENSG00000164253.14"/>
</dbReference>
<dbReference type="Ensembl" id="ENST00000507029.5">
    <molecule id="Q9HAD4-2"/>
    <property type="protein sequence ID" value="ENSP00000424287.1"/>
    <property type="gene ID" value="ENSG00000164253.14"/>
</dbReference>
<dbReference type="GeneID" id="55255"/>
<dbReference type="KEGG" id="hsa:55255"/>
<dbReference type="MANE-Select" id="ENST00000296679.9">
    <property type="protein sequence ID" value="ENSP00000296679.4"/>
    <property type="RefSeq nucleotide sequence ID" value="NM_018268.4"/>
    <property type="RefSeq protein sequence ID" value="NP_060738.2"/>
</dbReference>
<dbReference type="UCSC" id="uc003kff.2">
    <molecule id="Q9HAD4-1"/>
    <property type="organism name" value="human"/>
</dbReference>
<dbReference type="AGR" id="HGNC:25601"/>
<dbReference type="CTD" id="55255"/>
<dbReference type="DisGeNET" id="55255"/>
<dbReference type="GeneCards" id="WDR41"/>
<dbReference type="HGNC" id="HGNC:25601">
    <property type="gene designation" value="WDR41"/>
</dbReference>
<dbReference type="HPA" id="ENSG00000164253">
    <property type="expression patterns" value="Low tissue specificity"/>
</dbReference>
<dbReference type="MIM" id="617502">
    <property type="type" value="gene"/>
</dbReference>
<dbReference type="neXtProt" id="NX_Q9HAD4"/>
<dbReference type="OpenTargets" id="ENSG00000164253"/>
<dbReference type="PharmGKB" id="PA134906058"/>
<dbReference type="VEuPathDB" id="HostDB:ENSG00000164253"/>
<dbReference type="eggNOG" id="ENOG502QURA">
    <property type="taxonomic scope" value="Eukaryota"/>
</dbReference>
<dbReference type="GeneTree" id="ENSGT00390000017026"/>
<dbReference type="InParanoid" id="Q9HAD4"/>
<dbReference type="OMA" id="VCLWNAQ"/>
<dbReference type="OrthoDB" id="273067at2759"/>
<dbReference type="PAN-GO" id="Q9HAD4">
    <property type="GO annotations" value="0 GO annotations based on evolutionary models"/>
</dbReference>
<dbReference type="PhylomeDB" id="Q9HAD4"/>
<dbReference type="TreeFam" id="TF332914"/>
<dbReference type="PathwayCommons" id="Q9HAD4"/>
<dbReference type="SignaLink" id="Q9HAD4"/>
<dbReference type="BioGRID-ORCS" id="55255">
    <property type="hits" value="8 hits in 1155 CRISPR screens"/>
</dbReference>
<dbReference type="ChiTaRS" id="WDR41">
    <property type="organism name" value="human"/>
</dbReference>
<dbReference type="GenomeRNAi" id="55255"/>
<dbReference type="Pharos" id="Q9HAD4">
    <property type="development level" value="Tbio"/>
</dbReference>
<dbReference type="PRO" id="PR:Q9HAD4"/>
<dbReference type="Proteomes" id="UP000005640">
    <property type="component" value="Chromosome 5"/>
</dbReference>
<dbReference type="RNAct" id="Q9HAD4">
    <property type="molecule type" value="protein"/>
</dbReference>
<dbReference type="Bgee" id="ENSG00000164253">
    <property type="expression patterns" value="Expressed in secondary oocyte and 203 other cell types or tissues"/>
</dbReference>
<dbReference type="ExpressionAtlas" id="Q9HAD4">
    <property type="expression patterns" value="baseline and differential"/>
</dbReference>
<dbReference type="GO" id="GO:0005737">
    <property type="term" value="C:cytoplasm"/>
    <property type="evidence" value="ECO:0000314"/>
    <property type="project" value="UniProtKB"/>
</dbReference>
<dbReference type="GO" id="GO:0032045">
    <property type="term" value="C:guanyl-nucleotide exchange factor complex"/>
    <property type="evidence" value="ECO:0000314"/>
    <property type="project" value="HGNC"/>
</dbReference>
<dbReference type="GO" id="GO:0005765">
    <property type="term" value="C:lysosomal membrane"/>
    <property type="evidence" value="ECO:0007005"/>
    <property type="project" value="UniProtKB"/>
</dbReference>
<dbReference type="GO" id="GO:0005096">
    <property type="term" value="F:GTPase activator activity"/>
    <property type="evidence" value="ECO:0000315"/>
    <property type="project" value="UniProtKB"/>
</dbReference>
<dbReference type="GO" id="GO:0006914">
    <property type="term" value="P:autophagy"/>
    <property type="evidence" value="ECO:0007669"/>
    <property type="project" value="UniProtKB-KW"/>
</dbReference>
<dbReference type="GO" id="GO:0045920">
    <property type="term" value="P:negative regulation of exocytosis"/>
    <property type="evidence" value="ECO:0000303"/>
    <property type="project" value="ComplexPortal"/>
</dbReference>
<dbReference type="GO" id="GO:0050777">
    <property type="term" value="P:negative regulation of immune response"/>
    <property type="evidence" value="ECO:0000303"/>
    <property type="project" value="ComplexPortal"/>
</dbReference>
<dbReference type="GO" id="GO:0010506">
    <property type="term" value="P:regulation of autophagy"/>
    <property type="evidence" value="ECO:0000315"/>
    <property type="project" value="UniProtKB"/>
</dbReference>
<dbReference type="FunFam" id="2.130.10.10:FF:000564">
    <property type="entry name" value="WD repeat domain 41"/>
    <property type="match status" value="1"/>
</dbReference>
<dbReference type="FunFam" id="2.130.10.10:FF:000431">
    <property type="entry name" value="WD repeat-containing protein 41 isoform X2"/>
    <property type="match status" value="1"/>
</dbReference>
<dbReference type="Gene3D" id="2.130.10.10">
    <property type="entry name" value="YVTN repeat-like/Quinoprotein amine dehydrogenase"/>
    <property type="match status" value="2"/>
</dbReference>
<dbReference type="InterPro" id="IPR020472">
    <property type="entry name" value="G-protein_beta_WD-40_rep"/>
</dbReference>
<dbReference type="InterPro" id="IPR015943">
    <property type="entry name" value="WD40/YVTN_repeat-like_dom_sf"/>
</dbReference>
<dbReference type="InterPro" id="IPR019775">
    <property type="entry name" value="WD40_repeat_CS"/>
</dbReference>
<dbReference type="InterPro" id="IPR036322">
    <property type="entry name" value="WD40_repeat_dom_sf"/>
</dbReference>
<dbReference type="InterPro" id="IPR001680">
    <property type="entry name" value="WD40_rpt"/>
</dbReference>
<dbReference type="InterPro" id="IPR040102">
    <property type="entry name" value="WDR41"/>
</dbReference>
<dbReference type="PANTHER" id="PTHR22805:SF2">
    <property type="entry name" value="WD REPEAT-CONTAINING PROTEIN 41"/>
    <property type="match status" value="1"/>
</dbReference>
<dbReference type="PANTHER" id="PTHR22805">
    <property type="entry name" value="WDR41-RELATED"/>
    <property type="match status" value="1"/>
</dbReference>
<dbReference type="Pfam" id="PF25178">
    <property type="entry name" value="Beta-prop_WDR41"/>
    <property type="match status" value="1"/>
</dbReference>
<dbReference type="PRINTS" id="PR00320">
    <property type="entry name" value="GPROTEINBRPT"/>
</dbReference>
<dbReference type="SMART" id="SM00320">
    <property type="entry name" value="WD40"/>
    <property type="match status" value="6"/>
</dbReference>
<dbReference type="SUPFAM" id="SSF50978">
    <property type="entry name" value="WD40 repeat-like"/>
    <property type="match status" value="1"/>
</dbReference>
<dbReference type="PROSITE" id="PS00678">
    <property type="entry name" value="WD_REPEATS_1"/>
    <property type="match status" value="2"/>
</dbReference>
<dbReference type="PROSITE" id="PS50082">
    <property type="entry name" value="WD_REPEATS_2"/>
    <property type="match status" value="3"/>
</dbReference>
<dbReference type="PROSITE" id="PS50294">
    <property type="entry name" value="WD_REPEATS_REGION"/>
    <property type="match status" value="2"/>
</dbReference>
<comment type="function">
    <text evidence="3 4 5 6 7">Non-catalytic component of the C9orf72-SMCR8 complex, a complex that has guanine nucleotide exchange factor (GEF) activity and regulates autophagy (PubMed:27103069, PubMed:27193190, PubMed:27617292, PubMed:28195531). The C9orf72-SMCR8 complex promotes the exchange of GDP to GTP, converting inactive GDP-bound RAB8A and RAB39B into their active GTP-bound form, thereby promoting autophagosome maturation (PubMed:27103069). As part of the C9orf72-SMCR8 complex, stimulates RAB8A and RAB11A GTPase activity in vitro, however WDR42 is shown not be an essential complex component for this function (PubMed:32303654). The C9orf72-SMCR8 complex also acts as a negative regulator of autophagy initiation by interacting with the ULK1/ATG1 kinase complex and inhibiting its protein kinase activity (PubMed:27103069, PubMed:27617292).</text>
</comment>
<comment type="subunit">
    <text evidence="3 4 5 6 7">Component of the C9orf72-SMCR8 complex, at least composed of C9orf72, SMCR8 and WDR41 (PubMed:27103069, PubMed:27193190, PubMed:27617292, PubMed:28195531, PubMed:32303654). The complex is formed of two protomers, each individually consisting of one molecule each of C9orf72, SMCR8 and WDR41 (PubMed:32303654). The protomers homodimerize via an interaction between C9orf72 (via C-terminus) and SMCR8 (via N-terminus) (PubMed:32303654). Within each protomer SMCR8 (via DENN domain) acts as a bridging protein between WDR41 (via C-terminus and N-terminus) and C9orf72 (via C-terminus) (PubMed:32303654). The C9orf72-SMCR8 complex associates with the ULK1/ATG1 kinase complex (PubMed:27617292, PubMed:28195531).</text>
</comment>
<comment type="subcellular location">
    <subcellularLocation>
        <location evidence="4">Cytoplasm</location>
    </subcellularLocation>
</comment>
<comment type="alternative products">
    <event type="alternative splicing"/>
    <isoform>
        <id>Q9HAD4-1</id>
        <name>1</name>
        <sequence type="displayed"/>
    </isoform>
    <isoform>
        <id>Q9HAD4-2</id>
        <name>2</name>
        <sequence type="described" ref="VSP_054014"/>
    </isoform>
</comment>
<comment type="sequence caution" evidence="9">
    <conflict type="frameshift">
        <sequence resource="EMBL-CDS" id="AAO06948"/>
    </conflict>
</comment>
<organism>
    <name type="scientific">Homo sapiens</name>
    <name type="common">Human</name>
    <dbReference type="NCBI Taxonomy" id="9606"/>
    <lineage>
        <taxon>Eukaryota</taxon>
        <taxon>Metazoa</taxon>
        <taxon>Chordata</taxon>
        <taxon>Craniata</taxon>
        <taxon>Vertebrata</taxon>
        <taxon>Euteleostomi</taxon>
        <taxon>Mammalia</taxon>
        <taxon>Eutheria</taxon>
        <taxon>Euarchontoglires</taxon>
        <taxon>Primates</taxon>
        <taxon>Haplorrhini</taxon>
        <taxon>Catarrhini</taxon>
        <taxon>Hominidae</taxon>
        <taxon>Homo</taxon>
    </lineage>
</organism>
<feature type="chain" id="PRO_0000051390" description="WD repeat-containing protein 41">
    <location>
        <begin position="1"/>
        <end position="459"/>
    </location>
</feature>
<feature type="repeat" description="WD 1">
    <location>
        <begin position="40"/>
        <end position="79"/>
    </location>
</feature>
<feature type="repeat" description="WD 2">
    <location>
        <begin position="82"/>
        <end position="128"/>
    </location>
</feature>
<feature type="repeat" description="WD 3">
    <location>
        <begin position="131"/>
        <end position="168"/>
    </location>
</feature>
<feature type="repeat" description="WD 4">
    <location>
        <begin position="220"/>
        <end position="258"/>
    </location>
</feature>
<feature type="repeat" description="WD 5">
    <location>
        <begin position="321"/>
        <end position="359"/>
    </location>
</feature>
<feature type="repeat" description="WD 6">
    <location>
        <begin position="403"/>
        <end position="441"/>
    </location>
</feature>
<feature type="splice variant" id="VSP_054014" description="In isoform 2." evidence="8">
    <location>
        <begin position="18"/>
        <end position="72"/>
    </location>
</feature>
<feature type="sequence variant" id="VAR_031215" description="In dbSNP:rs389319.">
    <original>G</original>
    <variation>D</variation>
    <location>
        <position position="61"/>
    </location>
</feature>
<feature type="sequence variant" id="VAR_031216" description="In dbSNP:rs17751013.">
    <original>R</original>
    <variation>C</variation>
    <location>
        <position position="260"/>
    </location>
</feature>
<feature type="sequence variant" id="VAR_023777" description="In dbSNP:rs33204." evidence="1 2">
    <original>V</original>
    <variation>I</variation>
    <location>
        <position position="329"/>
    </location>
</feature>
<feature type="mutagenesis site" description="No effect on interaction with SMCR8." evidence="7">
    <original>S</original>
    <variation>A</variation>
    <location>
        <position position="438"/>
    </location>
</feature>
<feature type="mutagenesis site" description="No effect on interaction with SMCR8." evidence="7">
    <original>R</original>
    <variation>A</variation>
    <location>
        <position position="441"/>
    </location>
</feature>
<feature type="mutagenesis site" description="No effect on interaction with SMCR8." evidence="7">
    <original>S</original>
    <variation>A</variation>
    <location>
        <position position="442"/>
    </location>
</feature>
<feature type="mutagenesis site" description="Reduces interaction with the C9ORF72-SMCR8 complex; when associated with R-449. No effect on interaction with SMCR8." evidence="7">
    <original>L</original>
    <variation>R</variation>
    <location>
        <position position="445"/>
    </location>
</feature>
<feature type="mutagenesis site" description="No effect on interaction with SMCR8." evidence="7">
    <original>F</original>
    <variation>R</variation>
    <location>
        <position position="446"/>
    </location>
</feature>
<feature type="mutagenesis site" description="Reduces interaction with the C9ORF72-SMCR8 complex; when associated with R-445. No effect on interaction with SMCR8." evidence="7">
    <original>L</original>
    <variation>R</variation>
    <location>
        <position position="449"/>
    </location>
</feature>
<feature type="sequence conflict" description="In Ref. 1; BAB13915." evidence="9" ref="1">
    <original>G</original>
    <variation>D</variation>
    <location>
        <position position="365"/>
    </location>
</feature>
<feature type="strand" evidence="12">
    <location>
        <begin position="35"/>
        <end position="40"/>
    </location>
</feature>
<feature type="strand" evidence="12">
    <location>
        <begin position="46"/>
        <end position="53"/>
    </location>
</feature>
<feature type="strand" evidence="12">
    <location>
        <begin position="56"/>
        <end position="61"/>
    </location>
</feature>
<feature type="strand" evidence="12">
    <location>
        <begin position="66"/>
        <end position="73"/>
    </location>
</feature>
<feature type="strand" evidence="12">
    <location>
        <begin position="76"/>
        <end position="80"/>
    </location>
</feature>
<feature type="strand" evidence="12">
    <location>
        <begin position="87"/>
        <end position="92"/>
    </location>
</feature>
<feature type="strand" evidence="12">
    <location>
        <begin position="106"/>
        <end position="113"/>
    </location>
</feature>
<feature type="strand" evidence="12">
    <location>
        <begin position="115"/>
        <end position="118"/>
    </location>
</feature>
<feature type="turn" evidence="12">
    <location>
        <begin position="120"/>
        <end position="122"/>
    </location>
</feature>
<feature type="strand" evidence="12">
    <location>
        <begin position="127"/>
        <end position="129"/>
    </location>
</feature>
<feature type="turn" evidence="12">
    <location>
        <begin position="143"/>
        <end position="146"/>
    </location>
</feature>
<feature type="strand" evidence="12">
    <location>
        <begin position="152"/>
        <end position="154"/>
    </location>
</feature>
<feature type="strand" evidence="12">
    <location>
        <begin position="160"/>
        <end position="162"/>
    </location>
</feature>
<feature type="strand" evidence="12">
    <location>
        <begin position="179"/>
        <end position="182"/>
    </location>
</feature>
<feature type="strand" evidence="12">
    <location>
        <begin position="187"/>
        <end position="197"/>
    </location>
</feature>
<feature type="strand" evidence="12">
    <location>
        <begin position="225"/>
        <end position="230"/>
    </location>
</feature>
<feature type="strand" evidence="12">
    <location>
        <begin position="232"/>
        <end position="243"/>
    </location>
</feature>
<feature type="strand" evidence="12">
    <location>
        <begin position="245"/>
        <end position="249"/>
    </location>
</feature>
<feature type="strand" evidence="12">
    <location>
        <begin position="273"/>
        <end position="276"/>
    </location>
</feature>
<feature type="strand" evidence="12">
    <location>
        <begin position="295"/>
        <end position="297"/>
    </location>
</feature>
<feature type="strand" evidence="12">
    <location>
        <begin position="306"/>
        <end position="311"/>
    </location>
</feature>
<feature type="strand" evidence="12">
    <location>
        <begin position="313"/>
        <end position="316"/>
    </location>
</feature>
<feature type="strand" evidence="12">
    <location>
        <begin position="321"/>
        <end position="324"/>
    </location>
</feature>
<feature type="strand" evidence="12">
    <location>
        <begin position="329"/>
        <end position="332"/>
    </location>
</feature>
<feature type="turn" evidence="12">
    <location>
        <begin position="333"/>
        <end position="335"/>
    </location>
</feature>
<feature type="strand" evidence="12">
    <location>
        <begin position="336"/>
        <end position="339"/>
    </location>
</feature>
<feature type="strand" evidence="12">
    <location>
        <begin position="342"/>
        <end position="344"/>
    </location>
</feature>
<feature type="strand" evidence="12">
    <location>
        <begin position="347"/>
        <end position="350"/>
    </location>
</feature>
<feature type="strand" evidence="12">
    <location>
        <begin position="397"/>
        <end position="400"/>
    </location>
</feature>
<feature type="strand" evidence="12">
    <location>
        <begin position="408"/>
        <end position="413"/>
    </location>
</feature>
<feature type="strand" evidence="12">
    <location>
        <begin position="415"/>
        <end position="417"/>
    </location>
</feature>
<feature type="strand" evidence="12">
    <location>
        <begin position="419"/>
        <end position="423"/>
    </location>
</feature>
<feature type="strand" evidence="12">
    <location>
        <begin position="426"/>
        <end position="432"/>
    </location>
</feature>
<feature type="turn" evidence="12">
    <location>
        <begin position="434"/>
        <end position="436"/>
    </location>
</feature>
<feature type="helix" evidence="12">
    <location>
        <begin position="441"/>
        <end position="452"/>
    </location>
</feature>
<feature type="strand" evidence="12">
    <location>
        <begin position="453"/>
        <end position="455"/>
    </location>
</feature>
<name>WDR41_HUMAN</name>